<sequence>MARKKTLDFEQSLTELQTLVERLESGELSLEESLGAFEQGIRLTRECQTSLSQAEQKVQILLERDGELSEAPFDAEGDEA</sequence>
<reference key="1">
    <citation type="journal article" date="2009" name="Genome Res.">
        <title>Newly introduced genomic prophage islands are critical determinants of in vivo competitiveness in the Liverpool epidemic strain of Pseudomonas aeruginosa.</title>
        <authorList>
            <person name="Winstanley C."/>
            <person name="Langille M.G.I."/>
            <person name="Fothergill J.L."/>
            <person name="Kukavica-Ibrulj I."/>
            <person name="Paradis-Bleau C."/>
            <person name="Sanschagrin F."/>
            <person name="Thomson N.R."/>
            <person name="Winsor G.L."/>
            <person name="Quail M.A."/>
            <person name="Lennard N."/>
            <person name="Bignell A."/>
            <person name="Clarke L."/>
            <person name="Seeger K."/>
            <person name="Saunders D."/>
            <person name="Harris D."/>
            <person name="Parkhill J."/>
            <person name="Hancock R.E.W."/>
            <person name="Brinkman F.S.L."/>
            <person name="Levesque R.C."/>
        </authorList>
    </citation>
    <scope>NUCLEOTIDE SEQUENCE [LARGE SCALE GENOMIC DNA]</scope>
    <source>
        <strain>LESB58</strain>
    </source>
</reference>
<feature type="chain" id="PRO_1000119943" description="Exodeoxyribonuclease 7 small subunit">
    <location>
        <begin position="1"/>
        <end position="80"/>
    </location>
</feature>
<keyword id="KW-0963">Cytoplasm</keyword>
<keyword id="KW-0269">Exonuclease</keyword>
<keyword id="KW-0378">Hydrolase</keyword>
<keyword id="KW-0540">Nuclease</keyword>
<comment type="function">
    <text evidence="1">Bidirectionally degrades single-stranded DNA into large acid-insoluble oligonucleotides, which are then degraded further into small acid-soluble oligonucleotides.</text>
</comment>
<comment type="catalytic activity">
    <reaction evidence="1">
        <text>Exonucleolytic cleavage in either 5'- to 3'- or 3'- to 5'-direction to yield nucleoside 5'-phosphates.</text>
        <dbReference type="EC" id="3.1.11.6"/>
    </reaction>
</comment>
<comment type="subunit">
    <text evidence="1">Heterooligomer composed of large and small subunits.</text>
</comment>
<comment type="subcellular location">
    <subcellularLocation>
        <location evidence="1">Cytoplasm</location>
    </subcellularLocation>
</comment>
<comment type="similarity">
    <text evidence="1">Belongs to the XseB family.</text>
</comment>
<gene>
    <name evidence="1" type="primary">xseB</name>
    <name type="ordered locus">PLES_09341</name>
</gene>
<protein>
    <recommendedName>
        <fullName evidence="1">Exodeoxyribonuclease 7 small subunit</fullName>
        <ecNumber evidence="1">3.1.11.6</ecNumber>
    </recommendedName>
    <alternativeName>
        <fullName evidence="1">Exodeoxyribonuclease VII small subunit</fullName>
        <shortName evidence="1">Exonuclease VII small subunit</shortName>
    </alternativeName>
</protein>
<accession>B7V7R6</accession>
<dbReference type="EC" id="3.1.11.6" evidence="1"/>
<dbReference type="EMBL" id="FM209186">
    <property type="protein sequence ID" value="CAW25661.1"/>
    <property type="molecule type" value="Genomic_DNA"/>
</dbReference>
<dbReference type="RefSeq" id="WP_003093283.1">
    <property type="nucleotide sequence ID" value="NC_011770.1"/>
</dbReference>
<dbReference type="SMR" id="B7V7R6"/>
<dbReference type="KEGG" id="pag:PLES_09341"/>
<dbReference type="HOGENOM" id="CLU_145918_3_3_6"/>
<dbReference type="GO" id="GO:0005829">
    <property type="term" value="C:cytosol"/>
    <property type="evidence" value="ECO:0007669"/>
    <property type="project" value="TreeGrafter"/>
</dbReference>
<dbReference type="GO" id="GO:0009318">
    <property type="term" value="C:exodeoxyribonuclease VII complex"/>
    <property type="evidence" value="ECO:0007669"/>
    <property type="project" value="InterPro"/>
</dbReference>
<dbReference type="GO" id="GO:0008855">
    <property type="term" value="F:exodeoxyribonuclease VII activity"/>
    <property type="evidence" value="ECO:0007669"/>
    <property type="project" value="UniProtKB-UniRule"/>
</dbReference>
<dbReference type="GO" id="GO:0006308">
    <property type="term" value="P:DNA catabolic process"/>
    <property type="evidence" value="ECO:0007669"/>
    <property type="project" value="UniProtKB-UniRule"/>
</dbReference>
<dbReference type="FunFam" id="1.10.287.1040:FF:000011">
    <property type="entry name" value="Exodeoxyribonuclease 7 small subunit"/>
    <property type="match status" value="1"/>
</dbReference>
<dbReference type="Gene3D" id="1.10.287.1040">
    <property type="entry name" value="Exonuclease VII, small subunit"/>
    <property type="match status" value="1"/>
</dbReference>
<dbReference type="HAMAP" id="MF_00337">
    <property type="entry name" value="Exonuc_7_S"/>
    <property type="match status" value="1"/>
</dbReference>
<dbReference type="InterPro" id="IPR003761">
    <property type="entry name" value="Exonuc_VII_S"/>
</dbReference>
<dbReference type="InterPro" id="IPR037004">
    <property type="entry name" value="Exonuc_VII_ssu_sf"/>
</dbReference>
<dbReference type="NCBIfam" id="NF002140">
    <property type="entry name" value="PRK00977.1-4"/>
    <property type="match status" value="1"/>
</dbReference>
<dbReference type="NCBIfam" id="TIGR01280">
    <property type="entry name" value="xseB"/>
    <property type="match status" value="1"/>
</dbReference>
<dbReference type="PANTHER" id="PTHR34137">
    <property type="entry name" value="EXODEOXYRIBONUCLEASE 7 SMALL SUBUNIT"/>
    <property type="match status" value="1"/>
</dbReference>
<dbReference type="PANTHER" id="PTHR34137:SF1">
    <property type="entry name" value="EXODEOXYRIBONUCLEASE 7 SMALL SUBUNIT"/>
    <property type="match status" value="1"/>
</dbReference>
<dbReference type="Pfam" id="PF02609">
    <property type="entry name" value="Exonuc_VII_S"/>
    <property type="match status" value="1"/>
</dbReference>
<dbReference type="PIRSF" id="PIRSF006488">
    <property type="entry name" value="Exonuc_VII_S"/>
    <property type="match status" value="1"/>
</dbReference>
<dbReference type="SUPFAM" id="SSF116842">
    <property type="entry name" value="XseB-like"/>
    <property type="match status" value="1"/>
</dbReference>
<evidence type="ECO:0000255" key="1">
    <source>
        <dbReference type="HAMAP-Rule" id="MF_00337"/>
    </source>
</evidence>
<name>EX7S_PSEA8</name>
<proteinExistence type="inferred from homology"/>
<organism>
    <name type="scientific">Pseudomonas aeruginosa (strain LESB58)</name>
    <dbReference type="NCBI Taxonomy" id="557722"/>
    <lineage>
        <taxon>Bacteria</taxon>
        <taxon>Pseudomonadati</taxon>
        <taxon>Pseudomonadota</taxon>
        <taxon>Gammaproteobacteria</taxon>
        <taxon>Pseudomonadales</taxon>
        <taxon>Pseudomonadaceae</taxon>
        <taxon>Pseudomonas</taxon>
    </lineage>
</organism>